<reference key="1">
    <citation type="journal article" date="2008" name="Foodborne Pathog. Dis.">
        <title>The complete genome sequence and analysis of the human pathogen Campylobacter lari.</title>
        <authorList>
            <person name="Miller W.G."/>
            <person name="Wang G."/>
            <person name="Binnewies T.T."/>
            <person name="Parker C.T."/>
        </authorList>
    </citation>
    <scope>NUCLEOTIDE SEQUENCE [LARGE SCALE GENOMIC DNA]</scope>
    <source>
        <strain>RM2100 / D67 / ATCC BAA-1060</strain>
    </source>
</reference>
<proteinExistence type="inferred from homology"/>
<keyword id="KW-0067">ATP-binding</keyword>
<keyword id="KW-0997">Cell inner membrane</keyword>
<keyword id="KW-1003">Cell membrane</keyword>
<keyword id="KW-0963">Cytoplasm</keyword>
<keyword id="KW-0472">Membrane</keyword>
<keyword id="KW-0479">Metal-binding</keyword>
<keyword id="KW-0547">Nucleotide-binding</keyword>
<keyword id="KW-0653">Protein transport</keyword>
<keyword id="KW-1185">Reference proteome</keyword>
<keyword id="KW-1278">Translocase</keyword>
<keyword id="KW-0811">Translocation</keyword>
<keyword id="KW-0813">Transport</keyword>
<keyword id="KW-0862">Zinc</keyword>
<comment type="function">
    <text evidence="1">Part of the Sec protein translocase complex. Interacts with the SecYEG preprotein conducting channel. Has a central role in coupling the hydrolysis of ATP to the transfer of proteins into and across the cell membrane, serving as an ATP-driven molecular motor driving the stepwise translocation of polypeptide chains across the membrane.</text>
</comment>
<comment type="catalytic activity">
    <reaction evidence="1">
        <text>ATP + H2O + cellular proteinSide 1 = ADP + phosphate + cellular proteinSide 2.</text>
        <dbReference type="EC" id="7.4.2.8"/>
    </reaction>
</comment>
<comment type="cofactor">
    <cofactor evidence="1">
        <name>Zn(2+)</name>
        <dbReference type="ChEBI" id="CHEBI:29105"/>
    </cofactor>
    <text evidence="1">May bind 1 zinc ion per subunit.</text>
</comment>
<comment type="subunit">
    <text evidence="1">Monomer and homodimer. Part of the essential Sec protein translocation apparatus which comprises SecA, SecYEG and auxiliary proteins SecDF-YajC and YidC.</text>
</comment>
<comment type="subcellular location">
    <subcellularLocation>
        <location evidence="1">Cell inner membrane</location>
        <topology evidence="1">Peripheral membrane protein</topology>
        <orientation evidence="1">Cytoplasmic side</orientation>
    </subcellularLocation>
    <subcellularLocation>
        <location evidence="1">Cytoplasm</location>
    </subcellularLocation>
    <text evidence="1">Distribution is 50-50.</text>
</comment>
<comment type="similarity">
    <text evidence="1">Belongs to the SecA family.</text>
</comment>
<protein>
    <recommendedName>
        <fullName evidence="1">Protein translocase subunit SecA</fullName>
        <ecNumber evidence="1">7.4.2.8</ecNumber>
    </recommendedName>
</protein>
<name>SECA_CAMLR</name>
<organism>
    <name type="scientific">Campylobacter lari (strain RM2100 / D67 / ATCC BAA-1060)</name>
    <dbReference type="NCBI Taxonomy" id="306263"/>
    <lineage>
        <taxon>Bacteria</taxon>
        <taxon>Pseudomonadati</taxon>
        <taxon>Campylobacterota</taxon>
        <taxon>Epsilonproteobacteria</taxon>
        <taxon>Campylobacterales</taxon>
        <taxon>Campylobacteraceae</taxon>
        <taxon>Campylobacter</taxon>
    </lineage>
</organism>
<dbReference type="EC" id="7.4.2.8" evidence="1"/>
<dbReference type="EMBL" id="CP000932">
    <property type="protein sequence ID" value="ACM63860.1"/>
    <property type="molecule type" value="Genomic_DNA"/>
</dbReference>
<dbReference type="RefSeq" id="WP_012661243.1">
    <property type="nucleotide sequence ID" value="NC_012039.1"/>
</dbReference>
<dbReference type="SMR" id="B9KFM5"/>
<dbReference type="STRING" id="306263.Cla_0525"/>
<dbReference type="KEGG" id="cla:CLA_0525"/>
<dbReference type="PATRIC" id="fig|306263.5.peg.509"/>
<dbReference type="eggNOG" id="COG0653">
    <property type="taxonomic scope" value="Bacteria"/>
</dbReference>
<dbReference type="HOGENOM" id="CLU_005314_3_0_7"/>
<dbReference type="Proteomes" id="UP000007727">
    <property type="component" value="Chromosome"/>
</dbReference>
<dbReference type="GO" id="GO:0031522">
    <property type="term" value="C:cell envelope Sec protein transport complex"/>
    <property type="evidence" value="ECO:0007669"/>
    <property type="project" value="TreeGrafter"/>
</dbReference>
<dbReference type="GO" id="GO:0005829">
    <property type="term" value="C:cytosol"/>
    <property type="evidence" value="ECO:0007669"/>
    <property type="project" value="TreeGrafter"/>
</dbReference>
<dbReference type="GO" id="GO:0005886">
    <property type="term" value="C:plasma membrane"/>
    <property type="evidence" value="ECO:0007669"/>
    <property type="project" value="UniProtKB-SubCell"/>
</dbReference>
<dbReference type="GO" id="GO:0005524">
    <property type="term" value="F:ATP binding"/>
    <property type="evidence" value="ECO:0007669"/>
    <property type="project" value="UniProtKB-UniRule"/>
</dbReference>
<dbReference type="GO" id="GO:0046872">
    <property type="term" value="F:metal ion binding"/>
    <property type="evidence" value="ECO:0007669"/>
    <property type="project" value="UniProtKB-KW"/>
</dbReference>
<dbReference type="GO" id="GO:0008564">
    <property type="term" value="F:protein-exporting ATPase activity"/>
    <property type="evidence" value="ECO:0007669"/>
    <property type="project" value="UniProtKB-EC"/>
</dbReference>
<dbReference type="GO" id="GO:0065002">
    <property type="term" value="P:intracellular protein transmembrane transport"/>
    <property type="evidence" value="ECO:0007669"/>
    <property type="project" value="UniProtKB-UniRule"/>
</dbReference>
<dbReference type="GO" id="GO:0017038">
    <property type="term" value="P:protein import"/>
    <property type="evidence" value="ECO:0007669"/>
    <property type="project" value="InterPro"/>
</dbReference>
<dbReference type="GO" id="GO:0006605">
    <property type="term" value="P:protein targeting"/>
    <property type="evidence" value="ECO:0007669"/>
    <property type="project" value="UniProtKB-UniRule"/>
</dbReference>
<dbReference type="GO" id="GO:0043952">
    <property type="term" value="P:protein transport by the Sec complex"/>
    <property type="evidence" value="ECO:0007669"/>
    <property type="project" value="TreeGrafter"/>
</dbReference>
<dbReference type="CDD" id="cd17928">
    <property type="entry name" value="DEXDc_SecA"/>
    <property type="match status" value="1"/>
</dbReference>
<dbReference type="CDD" id="cd18803">
    <property type="entry name" value="SF2_C_secA"/>
    <property type="match status" value="1"/>
</dbReference>
<dbReference type="FunFam" id="3.40.50.300:FF:000429">
    <property type="entry name" value="Preprotein translocase subunit SecA"/>
    <property type="match status" value="1"/>
</dbReference>
<dbReference type="FunFam" id="3.90.1440.10:FF:000001">
    <property type="entry name" value="Preprotein translocase subunit SecA"/>
    <property type="match status" value="1"/>
</dbReference>
<dbReference type="Gene3D" id="1.10.3060.10">
    <property type="entry name" value="Helical scaffold and wing domains of SecA"/>
    <property type="match status" value="1"/>
</dbReference>
<dbReference type="Gene3D" id="3.40.50.300">
    <property type="entry name" value="P-loop containing nucleotide triphosphate hydrolases"/>
    <property type="match status" value="3"/>
</dbReference>
<dbReference type="Gene3D" id="3.90.1440.10">
    <property type="entry name" value="SecA, preprotein cross-linking domain"/>
    <property type="match status" value="1"/>
</dbReference>
<dbReference type="HAMAP" id="MF_01382">
    <property type="entry name" value="SecA"/>
    <property type="match status" value="1"/>
</dbReference>
<dbReference type="InterPro" id="IPR014001">
    <property type="entry name" value="Helicase_ATP-bd"/>
</dbReference>
<dbReference type="InterPro" id="IPR001650">
    <property type="entry name" value="Helicase_C-like"/>
</dbReference>
<dbReference type="InterPro" id="IPR027417">
    <property type="entry name" value="P-loop_NTPase"/>
</dbReference>
<dbReference type="InterPro" id="IPR004027">
    <property type="entry name" value="SEC_C_motif"/>
</dbReference>
<dbReference type="InterPro" id="IPR000185">
    <property type="entry name" value="SecA"/>
</dbReference>
<dbReference type="InterPro" id="IPR011115">
    <property type="entry name" value="SecA_DEAD"/>
</dbReference>
<dbReference type="InterPro" id="IPR014018">
    <property type="entry name" value="SecA_motor_DEAD"/>
</dbReference>
<dbReference type="InterPro" id="IPR011130">
    <property type="entry name" value="SecA_preprotein_X-link_dom"/>
</dbReference>
<dbReference type="InterPro" id="IPR044722">
    <property type="entry name" value="SecA_SF2_C"/>
</dbReference>
<dbReference type="InterPro" id="IPR011116">
    <property type="entry name" value="SecA_Wing/Scaffold"/>
</dbReference>
<dbReference type="InterPro" id="IPR036266">
    <property type="entry name" value="SecA_Wing/Scaffold_sf"/>
</dbReference>
<dbReference type="InterPro" id="IPR036670">
    <property type="entry name" value="SecA_X-link_sf"/>
</dbReference>
<dbReference type="NCBIfam" id="NF006630">
    <property type="entry name" value="PRK09200.1"/>
    <property type="match status" value="1"/>
</dbReference>
<dbReference type="NCBIfam" id="NF009538">
    <property type="entry name" value="PRK12904.1"/>
    <property type="match status" value="1"/>
</dbReference>
<dbReference type="NCBIfam" id="TIGR00963">
    <property type="entry name" value="secA"/>
    <property type="match status" value="1"/>
</dbReference>
<dbReference type="PANTHER" id="PTHR30612:SF0">
    <property type="entry name" value="CHLOROPLAST PROTEIN-TRANSPORTING ATPASE"/>
    <property type="match status" value="1"/>
</dbReference>
<dbReference type="PANTHER" id="PTHR30612">
    <property type="entry name" value="SECA INNER MEMBRANE COMPONENT OF SEC PROTEIN SECRETION SYSTEM"/>
    <property type="match status" value="1"/>
</dbReference>
<dbReference type="Pfam" id="PF21090">
    <property type="entry name" value="P-loop_SecA"/>
    <property type="match status" value="1"/>
</dbReference>
<dbReference type="Pfam" id="PF02810">
    <property type="entry name" value="SEC-C"/>
    <property type="match status" value="1"/>
</dbReference>
<dbReference type="Pfam" id="PF07517">
    <property type="entry name" value="SecA_DEAD"/>
    <property type="match status" value="1"/>
</dbReference>
<dbReference type="Pfam" id="PF01043">
    <property type="entry name" value="SecA_PP_bind"/>
    <property type="match status" value="1"/>
</dbReference>
<dbReference type="Pfam" id="PF07516">
    <property type="entry name" value="SecA_SW"/>
    <property type="match status" value="1"/>
</dbReference>
<dbReference type="PRINTS" id="PR00906">
    <property type="entry name" value="SECA"/>
</dbReference>
<dbReference type="SMART" id="SM00957">
    <property type="entry name" value="SecA_DEAD"/>
    <property type="match status" value="1"/>
</dbReference>
<dbReference type="SMART" id="SM00958">
    <property type="entry name" value="SecA_PP_bind"/>
    <property type="match status" value="1"/>
</dbReference>
<dbReference type="SUPFAM" id="SSF81886">
    <property type="entry name" value="Helical scaffold and wing domains of SecA"/>
    <property type="match status" value="1"/>
</dbReference>
<dbReference type="SUPFAM" id="SSF52540">
    <property type="entry name" value="P-loop containing nucleoside triphosphate hydrolases"/>
    <property type="match status" value="2"/>
</dbReference>
<dbReference type="SUPFAM" id="SSF81767">
    <property type="entry name" value="Pre-protein crosslinking domain of SecA"/>
    <property type="match status" value="1"/>
</dbReference>
<dbReference type="PROSITE" id="PS51196">
    <property type="entry name" value="SECA_MOTOR_DEAD"/>
    <property type="match status" value="1"/>
</dbReference>
<sequence length="863" mass="98657">MFSSVFKAIFGTKNDREVKKYLKRVAQINALESKYQNLSDDELKQKFIDFKTQIQKEEKTLDQILNDVFAIVREVGKRTLNMRHFDVQLIGGMVLHEGKIAEMKTGEGKTLVATLPVVLNAMSGKGVHVVTVNDYLAKRDAEQMSAIYNFLGFSVGVILSEQNSDEAHKKAYECDITYGTNNEFGFDYLRDNMKFSKLEKVQREHHFVIVDEVDSILIDEARTPLIISGPTNRTLDGYIKANEVAKQMQKGQAATTPQELPSGDFVVDEKNRTIMITEAGISKAEKLFGVENLYSLDNAILAHQLDQALKAHNLFEKDVHYVLRDKEVVIVDEFTGRLSEGRRFSDGLHQALEAKENVKIQEESQTLADITFQNYFRMYKKLAGMTGTAQTEATEFSQIYNLDVVSIPTNIPVARIDKDDLIYKTQEEKFKAVIEEIKKANAKGQPVLVGTASIERSEVFHNMLVKERIPHHVLNAKNHEQEALIIQDAGKKGAVTIATNMAGRGVDIKIDDEVKALGGLYIIGTERHESRRIDNQLRGRAGRQGDPGVSRFYLSLEDNLLRIFGGDRIKNIMERLGIEEGEHIESRIVTRAVENAQKKVESLHFESRKHLLEYDDVANEQRKTIYNYRNELLDEEFDLQDKILKNIAEYSNHLVSQIYLNAELEDDVKHFESLKQKVSYECNLELNEVDFKDLGVIEVENKLSEILEKVYKDKMSIIEDKEARRIERILYLQILDNLWREHLYQMDILKTGIGLRSYNQKDPLVEYKKESYNLFMELVERIKFDSLKLLFNVAFTQQQAQNFEEKSHEQNEQFLSNTTESGVNENGEAQITKVPRNSPCPCGSGKKYKECHGKSGPKKGILA</sequence>
<feature type="chain" id="PRO_1000184221" description="Protein translocase subunit SecA">
    <location>
        <begin position="1"/>
        <end position="863"/>
    </location>
</feature>
<feature type="region of interest" description="Disordered" evidence="2">
    <location>
        <begin position="806"/>
        <end position="863"/>
    </location>
</feature>
<feature type="compositionally biased region" description="Polar residues" evidence="2">
    <location>
        <begin position="812"/>
        <end position="829"/>
    </location>
</feature>
<feature type="binding site" evidence="1">
    <location>
        <position position="88"/>
    </location>
    <ligand>
        <name>ATP</name>
        <dbReference type="ChEBI" id="CHEBI:30616"/>
    </ligand>
</feature>
<feature type="binding site" evidence="1">
    <location>
        <begin position="106"/>
        <end position="110"/>
    </location>
    <ligand>
        <name>ATP</name>
        <dbReference type="ChEBI" id="CHEBI:30616"/>
    </ligand>
</feature>
<feature type="binding site" evidence="1">
    <location>
        <position position="507"/>
    </location>
    <ligand>
        <name>ATP</name>
        <dbReference type="ChEBI" id="CHEBI:30616"/>
    </ligand>
</feature>
<feature type="binding site" evidence="1">
    <location>
        <position position="840"/>
    </location>
    <ligand>
        <name>Zn(2+)</name>
        <dbReference type="ChEBI" id="CHEBI:29105"/>
    </ligand>
</feature>
<feature type="binding site" evidence="1">
    <location>
        <position position="842"/>
    </location>
    <ligand>
        <name>Zn(2+)</name>
        <dbReference type="ChEBI" id="CHEBI:29105"/>
    </ligand>
</feature>
<feature type="binding site" evidence="1">
    <location>
        <position position="851"/>
    </location>
    <ligand>
        <name>Zn(2+)</name>
        <dbReference type="ChEBI" id="CHEBI:29105"/>
    </ligand>
</feature>
<feature type="binding site" evidence="1">
    <location>
        <position position="852"/>
    </location>
    <ligand>
        <name>Zn(2+)</name>
        <dbReference type="ChEBI" id="CHEBI:29105"/>
    </ligand>
</feature>
<accession>B9KFM5</accession>
<gene>
    <name evidence="1" type="primary">secA</name>
    <name type="ordered locus">Cla_0525</name>
</gene>
<evidence type="ECO:0000255" key="1">
    <source>
        <dbReference type="HAMAP-Rule" id="MF_01382"/>
    </source>
</evidence>
<evidence type="ECO:0000256" key="2">
    <source>
        <dbReference type="SAM" id="MobiDB-lite"/>
    </source>
</evidence>